<accession>A9QYN9</accession>
<gene>
    <name evidence="1" type="primary">rsgA</name>
    <name type="ordered locus">YpAngola_A0709</name>
</gene>
<dbReference type="EC" id="3.6.1.-" evidence="1"/>
<dbReference type="EMBL" id="CP000901">
    <property type="protein sequence ID" value="ABX85307.1"/>
    <property type="molecule type" value="Genomic_DNA"/>
</dbReference>
<dbReference type="RefSeq" id="WP_002209142.1">
    <property type="nucleotide sequence ID" value="NZ_CP009935.1"/>
</dbReference>
<dbReference type="SMR" id="A9QYN9"/>
<dbReference type="GeneID" id="57974243"/>
<dbReference type="KEGG" id="ypg:YpAngola_A0709"/>
<dbReference type="PATRIC" id="fig|349746.12.peg.1656"/>
<dbReference type="GO" id="GO:0005737">
    <property type="term" value="C:cytoplasm"/>
    <property type="evidence" value="ECO:0007669"/>
    <property type="project" value="UniProtKB-SubCell"/>
</dbReference>
<dbReference type="GO" id="GO:0005525">
    <property type="term" value="F:GTP binding"/>
    <property type="evidence" value="ECO:0007669"/>
    <property type="project" value="UniProtKB-UniRule"/>
</dbReference>
<dbReference type="GO" id="GO:0003924">
    <property type="term" value="F:GTPase activity"/>
    <property type="evidence" value="ECO:0007669"/>
    <property type="project" value="UniProtKB-UniRule"/>
</dbReference>
<dbReference type="GO" id="GO:0046872">
    <property type="term" value="F:metal ion binding"/>
    <property type="evidence" value="ECO:0007669"/>
    <property type="project" value="UniProtKB-KW"/>
</dbReference>
<dbReference type="GO" id="GO:0019843">
    <property type="term" value="F:rRNA binding"/>
    <property type="evidence" value="ECO:0007669"/>
    <property type="project" value="UniProtKB-KW"/>
</dbReference>
<dbReference type="GO" id="GO:0042274">
    <property type="term" value="P:ribosomal small subunit biogenesis"/>
    <property type="evidence" value="ECO:0007669"/>
    <property type="project" value="UniProtKB-UniRule"/>
</dbReference>
<dbReference type="CDD" id="cd01854">
    <property type="entry name" value="YjeQ_EngC"/>
    <property type="match status" value="1"/>
</dbReference>
<dbReference type="Gene3D" id="2.40.50.140">
    <property type="entry name" value="Nucleic acid-binding proteins"/>
    <property type="match status" value="1"/>
</dbReference>
<dbReference type="Gene3D" id="3.40.50.300">
    <property type="entry name" value="P-loop containing nucleotide triphosphate hydrolases"/>
    <property type="match status" value="1"/>
</dbReference>
<dbReference type="Gene3D" id="1.10.40.50">
    <property type="entry name" value="Probable gtpase engc, domain 3"/>
    <property type="match status" value="1"/>
</dbReference>
<dbReference type="HAMAP" id="MF_01820">
    <property type="entry name" value="GTPase_RsgA"/>
    <property type="match status" value="1"/>
</dbReference>
<dbReference type="InterPro" id="IPR030378">
    <property type="entry name" value="G_CP_dom"/>
</dbReference>
<dbReference type="InterPro" id="IPR012340">
    <property type="entry name" value="NA-bd_OB-fold"/>
</dbReference>
<dbReference type="InterPro" id="IPR027417">
    <property type="entry name" value="P-loop_NTPase"/>
</dbReference>
<dbReference type="InterPro" id="IPR004881">
    <property type="entry name" value="Ribosome_biogen_GTPase_RsgA"/>
</dbReference>
<dbReference type="InterPro" id="IPR010914">
    <property type="entry name" value="RsgA_GTPase_dom"/>
</dbReference>
<dbReference type="NCBIfam" id="NF008931">
    <property type="entry name" value="PRK12288.1"/>
    <property type="match status" value="1"/>
</dbReference>
<dbReference type="NCBIfam" id="TIGR00157">
    <property type="entry name" value="ribosome small subunit-dependent GTPase A"/>
    <property type="match status" value="1"/>
</dbReference>
<dbReference type="PANTHER" id="PTHR32120">
    <property type="entry name" value="SMALL RIBOSOMAL SUBUNIT BIOGENESIS GTPASE RSGA"/>
    <property type="match status" value="1"/>
</dbReference>
<dbReference type="PANTHER" id="PTHR32120:SF11">
    <property type="entry name" value="SMALL RIBOSOMAL SUBUNIT BIOGENESIS GTPASE RSGA 1, MITOCHONDRIAL-RELATED"/>
    <property type="match status" value="1"/>
</dbReference>
<dbReference type="Pfam" id="PF03193">
    <property type="entry name" value="RsgA_GTPase"/>
    <property type="match status" value="1"/>
</dbReference>
<dbReference type="SUPFAM" id="SSF52540">
    <property type="entry name" value="P-loop containing nucleoside triphosphate hydrolases"/>
    <property type="match status" value="1"/>
</dbReference>
<dbReference type="PROSITE" id="PS50936">
    <property type="entry name" value="ENGC_GTPASE"/>
    <property type="match status" value="1"/>
</dbReference>
<dbReference type="PROSITE" id="PS51721">
    <property type="entry name" value="G_CP"/>
    <property type="match status" value="1"/>
</dbReference>
<evidence type="ECO:0000255" key="1">
    <source>
        <dbReference type="HAMAP-Rule" id="MF_01820"/>
    </source>
</evidence>
<evidence type="ECO:0000255" key="2">
    <source>
        <dbReference type="PROSITE-ProRule" id="PRU01058"/>
    </source>
</evidence>
<evidence type="ECO:0000256" key="3">
    <source>
        <dbReference type="SAM" id="MobiDB-lite"/>
    </source>
</evidence>
<feature type="chain" id="PRO_1000188160" description="Small ribosomal subunit biogenesis GTPase RsgA">
    <location>
        <begin position="1"/>
        <end position="350"/>
    </location>
</feature>
<feature type="domain" description="CP-type G" evidence="2">
    <location>
        <begin position="103"/>
        <end position="273"/>
    </location>
</feature>
<feature type="region of interest" description="Disordered" evidence="3">
    <location>
        <begin position="1"/>
        <end position="35"/>
    </location>
</feature>
<feature type="compositionally biased region" description="Polar residues" evidence="3">
    <location>
        <begin position="1"/>
        <end position="17"/>
    </location>
</feature>
<feature type="binding site" evidence="1">
    <location>
        <begin position="159"/>
        <end position="162"/>
    </location>
    <ligand>
        <name>GTP</name>
        <dbReference type="ChEBI" id="CHEBI:37565"/>
    </ligand>
</feature>
<feature type="binding site" evidence="1">
    <location>
        <begin position="213"/>
        <end position="221"/>
    </location>
    <ligand>
        <name>GTP</name>
        <dbReference type="ChEBI" id="CHEBI:37565"/>
    </ligand>
</feature>
<feature type="binding site" evidence="1">
    <location>
        <position position="297"/>
    </location>
    <ligand>
        <name>Zn(2+)</name>
        <dbReference type="ChEBI" id="CHEBI:29105"/>
    </ligand>
</feature>
<feature type="binding site" evidence="1">
    <location>
        <position position="302"/>
    </location>
    <ligand>
        <name>Zn(2+)</name>
        <dbReference type="ChEBI" id="CHEBI:29105"/>
    </ligand>
</feature>
<feature type="binding site" evidence="1">
    <location>
        <position position="304"/>
    </location>
    <ligand>
        <name>Zn(2+)</name>
        <dbReference type="ChEBI" id="CHEBI:29105"/>
    </ligand>
</feature>
<feature type="binding site" evidence="1">
    <location>
        <position position="310"/>
    </location>
    <ligand>
        <name>Zn(2+)</name>
        <dbReference type="ChEBI" id="CHEBI:29105"/>
    </ligand>
</feature>
<proteinExistence type="inferred from homology"/>
<protein>
    <recommendedName>
        <fullName evidence="1">Small ribosomal subunit biogenesis GTPase RsgA</fullName>
        <ecNumber evidence="1">3.6.1.-</ecNumber>
    </recommendedName>
</protein>
<organism>
    <name type="scientific">Yersinia pestis bv. Antiqua (strain Angola)</name>
    <dbReference type="NCBI Taxonomy" id="349746"/>
    <lineage>
        <taxon>Bacteria</taxon>
        <taxon>Pseudomonadati</taxon>
        <taxon>Pseudomonadota</taxon>
        <taxon>Gammaproteobacteria</taxon>
        <taxon>Enterobacterales</taxon>
        <taxon>Yersiniaceae</taxon>
        <taxon>Yersinia</taxon>
    </lineage>
</organism>
<comment type="function">
    <text evidence="1">One of several proteins that assist in the late maturation steps of the functional core of the 30S ribosomal subunit. Helps release RbfA from mature subunits. May play a role in the assembly of ribosomal proteins into the subunit. Circularly permuted GTPase that catalyzes slow GTP hydrolysis, GTPase activity is stimulated by the 30S ribosomal subunit.</text>
</comment>
<comment type="cofactor">
    <cofactor evidence="1">
        <name>Zn(2+)</name>
        <dbReference type="ChEBI" id="CHEBI:29105"/>
    </cofactor>
    <text evidence="1">Binds 1 zinc ion per subunit.</text>
</comment>
<comment type="subunit">
    <text evidence="1">Monomer. Associates with 30S ribosomal subunit, binds 16S rRNA.</text>
</comment>
<comment type="subcellular location">
    <subcellularLocation>
        <location evidence="1">Cytoplasm</location>
    </subcellularLocation>
</comment>
<comment type="similarity">
    <text evidence="1">Belongs to the TRAFAC class YlqF/YawG GTPase family. RsgA subfamily.</text>
</comment>
<name>RSGA_YERPG</name>
<reference key="1">
    <citation type="journal article" date="2010" name="J. Bacteriol.">
        <title>Genome sequence of the deep-rooted Yersinia pestis strain Angola reveals new insights into the evolution and pangenome of the plague bacterium.</title>
        <authorList>
            <person name="Eppinger M."/>
            <person name="Worsham P.L."/>
            <person name="Nikolich M.P."/>
            <person name="Riley D.R."/>
            <person name="Sebastian Y."/>
            <person name="Mou S."/>
            <person name="Achtman M."/>
            <person name="Lindler L.E."/>
            <person name="Ravel J."/>
        </authorList>
    </citation>
    <scope>NUCLEOTIDE SEQUENCE [LARGE SCALE GENOMIC DNA]</scope>
    <source>
        <strain>Angola</strain>
    </source>
</reference>
<sequence length="350" mass="39092">MSKNKLSKGQQRRVQANHQRRLRTDRKPELDDSQLGDAQEGIVISRFGQHADVEAVDGTQHRCNIRRTIKSLVTGDRVVWRPGLQAQEGVRVKGIVEAVHERTSVLTRPDLYDGVKPIAANIDQIVIVSAILPELSLNIIDRYLVACETLEVEPLIVLNKIDLLDADGRKFVDGMMDIYRRIGYDVLEVSSQTREGMEAFENALTGRISIFAGQSGVGKSSLLNALLPPTDNEILVNTVSGNSGLGQHTTTAARLYHFQHGGDVIDSPGVREFGLWHLAPEQITQGFVEFRDYLGHCKFRDCSHTNDPGCALREAVEQGKIAEERFDNYHRILESMEQAKPRKTSDSDEK</sequence>
<keyword id="KW-0963">Cytoplasm</keyword>
<keyword id="KW-0342">GTP-binding</keyword>
<keyword id="KW-0378">Hydrolase</keyword>
<keyword id="KW-0479">Metal-binding</keyword>
<keyword id="KW-0547">Nucleotide-binding</keyword>
<keyword id="KW-0690">Ribosome biogenesis</keyword>
<keyword id="KW-0694">RNA-binding</keyword>
<keyword id="KW-0699">rRNA-binding</keyword>
<keyword id="KW-0862">Zinc</keyword>